<sequence>MESGRLIFSTAGSGAGQMLFLDCGAGGGGGGVGGGAMFHRGARPVLGMEEGGRGVKRPFFTTPDELLEEEYYDEQLPEKKRRLTPEQVHLLERSFEEENKLEPERKTELARKLGLQPRQVAVWFQNRRARWKTKQLERDFDRLKASFDALRADHDALLQDNHRLHSQVMSLTEKLQEKETTTEGSAGAAVDVPGLPAAADVKVAVPDAEEPALEEAAAAFEEQQEQQVKAEDRLSTGSGGSAVVDTDAQLVVGCGRQHLAAVDSSVESYFPGGDEYHDCVMGPMDHAAGGIQSEEDDGAGSDEGCSYYADDAGVLFADHGHHHHHQHADDDEEDGQQISCWWMWN</sequence>
<protein>
    <recommendedName>
        <fullName>Homeobox-leucine zipper protein HOX16</fullName>
    </recommendedName>
    <alternativeName>
        <fullName>HD-ZIP protein HOX16</fullName>
    </alternativeName>
    <alternativeName>
        <fullName>Homeodomain transcription factor HOX16</fullName>
    </alternativeName>
    <alternativeName>
        <fullName>OsHox16</fullName>
    </alternativeName>
</protein>
<name>HOX16_ORYSI</name>
<organism>
    <name type="scientific">Oryza sativa subsp. indica</name>
    <name type="common">Rice</name>
    <dbReference type="NCBI Taxonomy" id="39946"/>
    <lineage>
        <taxon>Eukaryota</taxon>
        <taxon>Viridiplantae</taxon>
        <taxon>Streptophyta</taxon>
        <taxon>Embryophyta</taxon>
        <taxon>Tracheophyta</taxon>
        <taxon>Spermatophyta</taxon>
        <taxon>Magnoliopsida</taxon>
        <taxon>Liliopsida</taxon>
        <taxon>Poales</taxon>
        <taxon>Poaceae</taxon>
        <taxon>BOP clade</taxon>
        <taxon>Oryzoideae</taxon>
        <taxon>Oryzeae</taxon>
        <taxon>Oryzinae</taxon>
        <taxon>Oryza</taxon>
        <taxon>Oryza sativa</taxon>
    </lineage>
</organism>
<keyword id="KW-0238">DNA-binding</keyword>
<keyword id="KW-0371">Homeobox</keyword>
<keyword id="KW-0539">Nucleus</keyword>
<keyword id="KW-1185">Reference proteome</keyword>
<keyword id="KW-0804">Transcription</keyword>
<keyword id="KW-0805">Transcription regulation</keyword>
<accession>A2X980</accession>
<accession>A5JPV2</accession>
<comment type="function">
    <text evidence="1">Probable transcription factor.</text>
</comment>
<comment type="subcellular location">
    <subcellularLocation>
        <location evidence="5">Nucleus</location>
    </subcellularLocation>
</comment>
<comment type="tissue specificity">
    <text evidence="4">Expressed in seedlings, stems, leaf sheaths and blades and panicles.</text>
</comment>
<comment type="similarity">
    <text evidence="5">Belongs to the HD-ZIP homeobox family. Class I subfamily.</text>
</comment>
<evidence type="ECO:0000250" key="1"/>
<evidence type="ECO:0000255" key="2">
    <source>
        <dbReference type="PROSITE-ProRule" id="PRU00108"/>
    </source>
</evidence>
<evidence type="ECO:0000256" key="3">
    <source>
        <dbReference type="SAM" id="MobiDB-lite"/>
    </source>
</evidence>
<evidence type="ECO:0000269" key="4">
    <source>
    </source>
</evidence>
<evidence type="ECO:0000305" key="5"/>
<dbReference type="EMBL" id="CM000127">
    <property type="protein sequence ID" value="EAY87390.1"/>
    <property type="molecule type" value="Genomic_DNA"/>
</dbReference>
<dbReference type="EMBL" id="EF555537">
    <property type="protein sequence ID" value="ABQ57278.1"/>
    <property type="molecule type" value="mRNA"/>
</dbReference>
<dbReference type="SMR" id="A2X980"/>
<dbReference type="EnsemblPlants" id="BGIOSGA008976-TA">
    <property type="protein sequence ID" value="BGIOSGA008976-PA"/>
    <property type="gene ID" value="BGIOSGA008976"/>
</dbReference>
<dbReference type="Gramene" id="BGIOSGA008976-TA">
    <property type="protein sequence ID" value="BGIOSGA008976-PA"/>
    <property type="gene ID" value="BGIOSGA008976"/>
</dbReference>
<dbReference type="HOGENOM" id="CLU_060842_2_0_1"/>
<dbReference type="OMA" id="FDASCHG"/>
<dbReference type="Proteomes" id="UP000007015">
    <property type="component" value="Chromosome 2"/>
</dbReference>
<dbReference type="GO" id="GO:0005634">
    <property type="term" value="C:nucleus"/>
    <property type="evidence" value="ECO:0007669"/>
    <property type="project" value="UniProtKB-SubCell"/>
</dbReference>
<dbReference type="GO" id="GO:0000981">
    <property type="term" value="F:DNA-binding transcription factor activity, RNA polymerase II-specific"/>
    <property type="evidence" value="ECO:0007669"/>
    <property type="project" value="InterPro"/>
</dbReference>
<dbReference type="GO" id="GO:0043565">
    <property type="term" value="F:sequence-specific DNA binding"/>
    <property type="evidence" value="ECO:0007669"/>
    <property type="project" value="InterPro"/>
</dbReference>
<dbReference type="GO" id="GO:0045893">
    <property type="term" value="P:positive regulation of DNA-templated transcription"/>
    <property type="evidence" value="ECO:0007669"/>
    <property type="project" value="TreeGrafter"/>
</dbReference>
<dbReference type="CDD" id="cd00086">
    <property type="entry name" value="homeodomain"/>
    <property type="match status" value="1"/>
</dbReference>
<dbReference type="FunFam" id="1.10.10.60:FF:000159">
    <property type="entry name" value="Homeobox-leucine zipper protein HAT5"/>
    <property type="match status" value="1"/>
</dbReference>
<dbReference type="Gene3D" id="1.10.10.60">
    <property type="entry name" value="Homeodomain-like"/>
    <property type="match status" value="1"/>
</dbReference>
<dbReference type="InterPro" id="IPR001356">
    <property type="entry name" value="HD"/>
</dbReference>
<dbReference type="InterPro" id="IPR045224">
    <property type="entry name" value="HDZip_class_I_plant"/>
</dbReference>
<dbReference type="InterPro" id="IPR017970">
    <property type="entry name" value="Homeobox_CS"/>
</dbReference>
<dbReference type="InterPro" id="IPR009057">
    <property type="entry name" value="Homeodomain-like_sf"/>
</dbReference>
<dbReference type="InterPro" id="IPR000047">
    <property type="entry name" value="HTH_motif"/>
</dbReference>
<dbReference type="InterPro" id="IPR003106">
    <property type="entry name" value="Leu_zip_homeo"/>
</dbReference>
<dbReference type="PANTHER" id="PTHR24326">
    <property type="entry name" value="HOMEOBOX-LEUCINE ZIPPER PROTEIN"/>
    <property type="match status" value="1"/>
</dbReference>
<dbReference type="PANTHER" id="PTHR24326:SF497">
    <property type="entry name" value="HOMEOBOX-LEUCINE ZIPPER PROTEIN HAT5"/>
    <property type="match status" value="1"/>
</dbReference>
<dbReference type="Pfam" id="PF02183">
    <property type="entry name" value="HALZ"/>
    <property type="match status" value="1"/>
</dbReference>
<dbReference type="Pfam" id="PF00046">
    <property type="entry name" value="Homeodomain"/>
    <property type="match status" value="1"/>
</dbReference>
<dbReference type="PRINTS" id="PR00031">
    <property type="entry name" value="HTHREPRESSR"/>
</dbReference>
<dbReference type="SMART" id="SM00389">
    <property type="entry name" value="HOX"/>
    <property type="match status" value="1"/>
</dbReference>
<dbReference type="SUPFAM" id="SSF46689">
    <property type="entry name" value="Homeodomain-like"/>
    <property type="match status" value="1"/>
</dbReference>
<dbReference type="PROSITE" id="PS00027">
    <property type="entry name" value="HOMEOBOX_1"/>
    <property type="match status" value="1"/>
</dbReference>
<dbReference type="PROSITE" id="PS50071">
    <property type="entry name" value="HOMEOBOX_2"/>
    <property type="match status" value="1"/>
</dbReference>
<gene>
    <name type="primary">HOX16</name>
    <name type="ORF">OsI_008623</name>
</gene>
<feature type="chain" id="PRO_0000331704" description="Homeobox-leucine zipper protein HOX16">
    <location>
        <begin position="1"/>
        <end position="345"/>
    </location>
</feature>
<feature type="DNA-binding region" description="Homeobox" evidence="2">
    <location>
        <begin position="76"/>
        <end position="135"/>
    </location>
</feature>
<feature type="region of interest" description="Leucine-zipper">
    <location>
        <begin position="134"/>
        <end position="178"/>
    </location>
</feature>
<feature type="region of interest" description="Disordered" evidence="3">
    <location>
        <begin position="220"/>
        <end position="241"/>
    </location>
</feature>
<reference key="1">
    <citation type="journal article" date="2005" name="PLoS Biol.">
        <title>The genomes of Oryza sativa: a history of duplications.</title>
        <authorList>
            <person name="Yu J."/>
            <person name="Wang J."/>
            <person name="Lin W."/>
            <person name="Li S."/>
            <person name="Li H."/>
            <person name="Zhou J."/>
            <person name="Ni P."/>
            <person name="Dong W."/>
            <person name="Hu S."/>
            <person name="Zeng C."/>
            <person name="Zhang J."/>
            <person name="Zhang Y."/>
            <person name="Li R."/>
            <person name="Xu Z."/>
            <person name="Li S."/>
            <person name="Li X."/>
            <person name="Zheng H."/>
            <person name="Cong L."/>
            <person name="Lin L."/>
            <person name="Yin J."/>
            <person name="Geng J."/>
            <person name="Li G."/>
            <person name="Shi J."/>
            <person name="Liu J."/>
            <person name="Lv H."/>
            <person name="Li J."/>
            <person name="Wang J."/>
            <person name="Deng Y."/>
            <person name="Ran L."/>
            <person name="Shi X."/>
            <person name="Wang X."/>
            <person name="Wu Q."/>
            <person name="Li C."/>
            <person name="Ren X."/>
            <person name="Wang J."/>
            <person name="Wang X."/>
            <person name="Li D."/>
            <person name="Liu D."/>
            <person name="Zhang X."/>
            <person name="Ji Z."/>
            <person name="Zhao W."/>
            <person name="Sun Y."/>
            <person name="Zhang Z."/>
            <person name="Bao J."/>
            <person name="Han Y."/>
            <person name="Dong L."/>
            <person name="Ji J."/>
            <person name="Chen P."/>
            <person name="Wu S."/>
            <person name="Liu J."/>
            <person name="Xiao Y."/>
            <person name="Bu D."/>
            <person name="Tan J."/>
            <person name="Yang L."/>
            <person name="Ye C."/>
            <person name="Zhang J."/>
            <person name="Xu J."/>
            <person name="Zhou Y."/>
            <person name="Yu Y."/>
            <person name="Zhang B."/>
            <person name="Zhuang S."/>
            <person name="Wei H."/>
            <person name="Liu B."/>
            <person name="Lei M."/>
            <person name="Yu H."/>
            <person name="Li Y."/>
            <person name="Xu H."/>
            <person name="Wei S."/>
            <person name="He X."/>
            <person name="Fang L."/>
            <person name="Zhang Z."/>
            <person name="Zhang Y."/>
            <person name="Huang X."/>
            <person name="Su Z."/>
            <person name="Tong W."/>
            <person name="Li J."/>
            <person name="Tong Z."/>
            <person name="Li S."/>
            <person name="Ye J."/>
            <person name="Wang L."/>
            <person name="Fang L."/>
            <person name="Lei T."/>
            <person name="Chen C.-S."/>
            <person name="Chen H.-C."/>
            <person name="Xu Z."/>
            <person name="Li H."/>
            <person name="Huang H."/>
            <person name="Zhang F."/>
            <person name="Xu H."/>
            <person name="Li N."/>
            <person name="Zhao C."/>
            <person name="Li S."/>
            <person name="Dong L."/>
            <person name="Huang Y."/>
            <person name="Li L."/>
            <person name="Xi Y."/>
            <person name="Qi Q."/>
            <person name="Li W."/>
            <person name="Zhang B."/>
            <person name="Hu W."/>
            <person name="Zhang Y."/>
            <person name="Tian X."/>
            <person name="Jiao Y."/>
            <person name="Liang X."/>
            <person name="Jin J."/>
            <person name="Gao L."/>
            <person name="Zheng W."/>
            <person name="Hao B."/>
            <person name="Liu S.-M."/>
            <person name="Wang W."/>
            <person name="Yuan L."/>
            <person name="Cao M."/>
            <person name="McDermott J."/>
            <person name="Samudrala R."/>
            <person name="Wang J."/>
            <person name="Wong G.K.-S."/>
            <person name="Yang H."/>
        </authorList>
    </citation>
    <scope>NUCLEOTIDE SEQUENCE [LARGE SCALE GENOMIC DNA]</scope>
    <source>
        <strain>cv. 93-11</strain>
    </source>
</reference>
<reference key="2">
    <citation type="journal article" date="2008" name="Plant Mol. Biol.">
        <title>A genome-wide survey of HD-Zip genes in rice and analysis of drought-responsive family members.</title>
        <authorList>
            <person name="Agalou A."/>
            <person name="Purwantomo S."/>
            <person name="Oevernaes E."/>
            <person name="Johannesson H."/>
            <person name="Zhu X."/>
            <person name="Estiati A."/>
            <person name="de Kam R.J."/>
            <person name="Engstroem P."/>
            <person name="Slamet-Loedin I.H."/>
            <person name="Zhu Z."/>
            <person name="Wang M."/>
            <person name="Xiong L."/>
            <person name="Meijer A.H."/>
            <person name="Ouwerkerk P.B.F."/>
        </authorList>
    </citation>
    <scope>NUCLEOTIDE SEQUENCE [MRNA] OF 104-278</scope>
    <scope>TISSUE SPECIFICITY</scope>
    <scope>GENE FAMILY</scope>
    <scope>NOMENCLATURE</scope>
    <source>
        <strain>cv. Minghui 86</strain>
    </source>
</reference>
<proteinExistence type="evidence at transcript level"/>